<reference key="1">
    <citation type="journal article" date="2004" name="J. Gen. Virol.">
        <title>Genetic content of wild-type human cytomegalovirus.</title>
        <authorList>
            <person name="Dolan A."/>
            <person name="Cunningham C."/>
            <person name="Hector R.D."/>
            <person name="Hassan-Walker A.F."/>
            <person name="Lee L."/>
            <person name="Addison C."/>
            <person name="Dargan D.J."/>
            <person name="McGeoch D.J."/>
            <person name="Gatherer D."/>
            <person name="Emery V.C."/>
            <person name="Griffiths P.D."/>
            <person name="Sinzger C."/>
            <person name="McSharry B.P."/>
            <person name="Wilkinson G.W.G."/>
            <person name="Davison A.J."/>
        </authorList>
    </citation>
    <scope>NUCLEOTIDE SEQUENCE [LARGE SCALE GENOMIC DNA]</scope>
</reference>
<keyword id="KW-0235">DNA replication</keyword>
<keyword id="KW-0238">DNA-binding</keyword>
<keyword id="KW-1048">Host nucleus</keyword>
<keyword id="KW-0945">Host-virus interaction</keyword>
<keyword id="KW-1090">Inhibition of host innate immune response by virus</keyword>
<keyword id="KW-1092">Inhibition of host IRF3 by virus</keyword>
<keyword id="KW-1100">Inhibition of host NF-kappa-B by virus</keyword>
<keyword id="KW-1113">Inhibition of host RLR pathway by virus</keyword>
<keyword id="KW-1017">Isopeptide bond</keyword>
<keyword id="KW-0597">Phosphoprotein</keyword>
<keyword id="KW-1185">Reference proteome</keyword>
<keyword id="KW-0832">Ubl conjugation</keyword>
<keyword id="KW-1194">Viral DNA replication</keyword>
<keyword id="KW-0899">Viral immunoevasion</keyword>
<keyword id="KW-0946">Virion</keyword>
<organism>
    <name type="scientific">Human cytomegalovirus (strain Merlin)</name>
    <name type="common">HHV-5</name>
    <name type="synonym">Human herpesvirus 5</name>
    <dbReference type="NCBI Taxonomy" id="295027"/>
    <lineage>
        <taxon>Viruses</taxon>
        <taxon>Duplodnaviria</taxon>
        <taxon>Heunggongvirae</taxon>
        <taxon>Peploviricota</taxon>
        <taxon>Herviviricetes</taxon>
        <taxon>Herpesvirales</taxon>
        <taxon>Orthoherpesviridae</taxon>
        <taxon>Betaherpesvirinae</taxon>
        <taxon>Cytomegalovirus</taxon>
        <taxon>Cytomegalovirus humanbeta5</taxon>
        <taxon>Human cytomegalovirus</taxon>
    </lineage>
</organism>
<sequence>MDRKTRLSEPPTLALRLKPYKTAIQQLRSVIRALKENTTVTFLPTPSLILQTVRSHCVSKITFNSSCLYITDKSFQPKTINNSTPLLGNFMYLTSSKDLTKFYVQDISDLSAKISMCAPDFNMEFSSACVHGQDIVRESENSAVHVDLDFGVVADLLKWIGPHTRVKRNVKKAPCPTGTVQILVHAGPPAIKFILTNGSELEFTANNRVSFHGVKNMRINVQLKNFYQTLLNCAVTKLPCTLRIVTEHDTLLYVASRNGLFAVENFLTEEPFQRGDPFDKNYVGNSGKSRGGGGGSGSLSSLANAGGLHDDGPGLDNDIMNEPMGLGGLGGGGGGGGKKHDRGGGGGSGTRKMSSGGGGGDHDHGLSSKEKYEQHKITSYLTSKGGSGGGGGGGGGGLDRNSGNYFNDAKEESDSEDSVTFEFVPNTKKQKCG</sequence>
<accession>F5HC97</accession>
<proteinExistence type="inferred from homology"/>
<evidence type="ECO:0000250" key="1">
    <source>
        <dbReference type="UniProtKB" id="P16790"/>
    </source>
</evidence>
<evidence type="ECO:0000256" key="2">
    <source>
        <dbReference type="SAM" id="MobiDB-lite"/>
    </source>
</evidence>
<evidence type="ECO:0000305" key="3"/>
<organismHost>
    <name type="scientific">Homo sapiens</name>
    <name type="common">Human</name>
    <dbReference type="NCBI Taxonomy" id="9606"/>
</organismHost>
<comment type="function">
    <text evidence="1">Accessory subunit of the DNA polymerase that plays an essential role in viral DNA replication and acts by increasing the processivity of polymerization. Forms dimers that binds to double-stranded DNA and UL54 specifically to stimulates long chain DNA synthesis efficiently. Plays an important role in maintaining the structure of viral replication compartments by interacting with host nucleolin/NUC. In addition, suppresses innate immune responses through effects on host IRF3 and NF-kappa-B. Mechanistically, interfere with the binding of IRF3 and the p65 NF-kappa-B subunit to the promoters of antiviral genes, thereby inhibiting the expression of these genes.</text>
</comment>
<comment type="subunit">
    <text evidence="1">Forms homodimers. Interacts with host SMARCB1. Interacts with host NCL/nucleolin; this interaction is important for the organization of proteins within viral replication compartments. Interacts with UL112/UL113; this interaction is necessary for efficient viral DNA replication. Interacts with UL84. Interacts with the uracil DNA glycosylase UL114. Interacts with the DNA polymerase catalytic subunit UL54. Interacts with host IRF3. Interacts with host RELA.</text>
</comment>
<comment type="subcellular location">
    <subcellularLocation>
        <location evidence="1">Virion</location>
    </subcellularLocation>
    <subcellularLocation>
        <location evidence="1">Host nucleus</location>
    </subcellularLocation>
</comment>
<comment type="domain">
    <text evidence="1">The C-terminal region is required for viral DNA synthesis.</text>
</comment>
<comment type="PTM">
    <text evidence="1">Phosphorylated by UL97 on serine residues, phosphorylation seems important for UL44 nuclear entry but does not directly affect its role in replication.</text>
</comment>
<comment type="PTM">
    <text evidence="1">Sumoylated. Sumoylation on Lys-410 increases viral DNA replication.</text>
</comment>
<comment type="similarity">
    <text evidence="3">Belongs to the herpesviridae polymerase accessory protein family.</text>
</comment>
<feature type="chain" id="PRO_0000418258" description="DNA polymerase processivity factor">
    <location>
        <begin position="1"/>
        <end position="433"/>
    </location>
</feature>
<feature type="region of interest" description="Disordered" evidence="2">
    <location>
        <begin position="274"/>
        <end position="433"/>
    </location>
</feature>
<feature type="compositionally biased region" description="Low complexity" evidence="2">
    <location>
        <begin position="298"/>
        <end position="307"/>
    </location>
</feature>
<feature type="compositionally biased region" description="Gly residues" evidence="2">
    <location>
        <begin position="325"/>
        <end position="336"/>
    </location>
</feature>
<feature type="compositionally biased region" description="Gly residues" evidence="2">
    <location>
        <begin position="344"/>
        <end position="359"/>
    </location>
</feature>
<feature type="compositionally biased region" description="Basic and acidic residues" evidence="2">
    <location>
        <begin position="360"/>
        <end position="376"/>
    </location>
</feature>
<feature type="compositionally biased region" description="Gly residues" evidence="2">
    <location>
        <begin position="385"/>
        <end position="398"/>
    </location>
</feature>
<dbReference type="EMBL" id="AY446894">
    <property type="protein sequence ID" value="AAR31608.1"/>
    <property type="molecule type" value="Genomic_DNA"/>
</dbReference>
<dbReference type="RefSeq" id="YP_081502.1">
    <property type="nucleotide sequence ID" value="NC_006273.2"/>
</dbReference>
<dbReference type="SMR" id="F5HC97"/>
<dbReference type="BioGRID" id="1678013">
    <property type="interactions" value="3"/>
</dbReference>
<dbReference type="DNASU" id="3077460"/>
<dbReference type="GeneID" id="3077460"/>
<dbReference type="KEGG" id="vg:3077460"/>
<dbReference type="Reactome" id="R-HSA-9609690">
    <property type="pathway name" value="HCMV Early Events"/>
</dbReference>
<dbReference type="Reactome" id="R-HSA-9610379">
    <property type="pathway name" value="HCMV Late Events"/>
</dbReference>
<dbReference type="Proteomes" id="UP000000938">
    <property type="component" value="Segment"/>
</dbReference>
<dbReference type="GO" id="GO:0042025">
    <property type="term" value="C:host cell nucleus"/>
    <property type="evidence" value="ECO:0007669"/>
    <property type="project" value="UniProtKB-SubCell"/>
</dbReference>
<dbReference type="GO" id="GO:0019033">
    <property type="term" value="C:viral tegument"/>
    <property type="evidence" value="ECO:0000304"/>
    <property type="project" value="Reactome"/>
</dbReference>
<dbReference type="GO" id="GO:0003677">
    <property type="term" value="F:DNA binding"/>
    <property type="evidence" value="ECO:0007669"/>
    <property type="project" value="UniProtKB-KW"/>
</dbReference>
<dbReference type="GO" id="GO:0030337">
    <property type="term" value="F:DNA polymerase processivity factor activity"/>
    <property type="evidence" value="ECO:0007669"/>
    <property type="project" value="InterPro"/>
</dbReference>
<dbReference type="GO" id="GO:0006260">
    <property type="term" value="P:DNA replication"/>
    <property type="evidence" value="ECO:0007669"/>
    <property type="project" value="UniProtKB-KW"/>
</dbReference>
<dbReference type="GO" id="GO:0039548">
    <property type="term" value="P:symbiont-mediated suppression of host cytoplasmic pattern recognition receptor signaling pathway via inhibition of IRF3 activity"/>
    <property type="evidence" value="ECO:0007669"/>
    <property type="project" value="UniProtKB-KW"/>
</dbReference>
<dbReference type="GO" id="GO:0085034">
    <property type="term" value="P:symbiont-mediated suppression of host NF-kappaB cascade"/>
    <property type="evidence" value="ECO:0007669"/>
    <property type="project" value="UniProtKB-KW"/>
</dbReference>
<dbReference type="GO" id="GO:0039693">
    <property type="term" value="P:viral DNA genome replication"/>
    <property type="evidence" value="ECO:0007669"/>
    <property type="project" value="UniProtKB-KW"/>
</dbReference>
<dbReference type="FunFam" id="3.70.10.10:FF:000028">
    <property type="entry name" value="DNA polymerase processivity factor"/>
    <property type="match status" value="1"/>
</dbReference>
<dbReference type="Gene3D" id="3.70.10.10">
    <property type="match status" value="1"/>
</dbReference>
<dbReference type="InterPro" id="IPR046938">
    <property type="entry name" value="DNA_clamp_sf"/>
</dbReference>
<dbReference type="InterPro" id="IPR004997">
    <property type="entry name" value="Herpes_PAP"/>
</dbReference>
<dbReference type="Pfam" id="PF03325">
    <property type="entry name" value="Herpes_PAP"/>
    <property type="match status" value="1"/>
</dbReference>
<dbReference type="SUPFAM" id="SSF55979">
    <property type="entry name" value="DNA clamp"/>
    <property type="match status" value="2"/>
</dbReference>
<name>VPAP_HCMVM</name>
<protein>
    <recommendedName>
        <fullName>DNA polymerase processivity factor</fullName>
    </recommendedName>
    <alternativeName>
        <fullName>Polymerase accessory protein</fullName>
        <shortName>PAP</shortName>
    </alternativeName>
    <alternativeName>
        <fullName>Protein ICP36</fullName>
    </alternativeName>
</protein>
<gene>
    <name type="primary">UL44</name>
</gene>